<protein>
    <recommendedName>
        <fullName evidence="1">Anhydro-N-acetylmuramic acid kinase</fullName>
        <ecNumber evidence="1">2.7.1.170</ecNumber>
    </recommendedName>
    <alternativeName>
        <fullName evidence="1">AnhMurNAc kinase</fullName>
    </alternativeName>
</protein>
<evidence type="ECO:0000255" key="1">
    <source>
        <dbReference type="HAMAP-Rule" id="MF_01270"/>
    </source>
</evidence>
<dbReference type="EC" id="2.7.1.170" evidence="1"/>
<dbReference type="EMBL" id="CP000026">
    <property type="protein sequence ID" value="AAV77348.1"/>
    <property type="molecule type" value="Genomic_DNA"/>
</dbReference>
<dbReference type="RefSeq" id="WP_000835012.1">
    <property type="nucleotide sequence ID" value="NC_006511.1"/>
</dbReference>
<dbReference type="SMR" id="Q5PIK4"/>
<dbReference type="KEGG" id="spt:SPA1407"/>
<dbReference type="HOGENOM" id="CLU_038782_0_0_6"/>
<dbReference type="UniPathway" id="UPA00343"/>
<dbReference type="UniPathway" id="UPA00544"/>
<dbReference type="Proteomes" id="UP000008185">
    <property type="component" value="Chromosome"/>
</dbReference>
<dbReference type="GO" id="GO:0005524">
    <property type="term" value="F:ATP binding"/>
    <property type="evidence" value="ECO:0007669"/>
    <property type="project" value="UniProtKB-UniRule"/>
</dbReference>
<dbReference type="GO" id="GO:0016301">
    <property type="term" value="F:kinase activity"/>
    <property type="evidence" value="ECO:0007669"/>
    <property type="project" value="UniProtKB-KW"/>
</dbReference>
<dbReference type="GO" id="GO:0016773">
    <property type="term" value="F:phosphotransferase activity, alcohol group as acceptor"/>
    <property type="evidence" value="ECO:0007669"/>
    <property type="project" value="UniProtKB-UniRule"/>
</dbReference>
<dbReference type="GO" id="GO:0097175">
    <property type="term" value="P:1,6-anhydro-N-acetyl-beta-muramic acid catabolic process"/>
    <property type="evidence" value="ECO:0007669"/>
    <property type="project" value="UniProtKB-UniRule"/>
</dbReference>
<dbReference type="GO" id="GO:0006040">
    <property type="term" value="P:amino sugar metabolic process"/>
    <property type="evidence" value="ECO:0007669"/>
    <property type="project" value="InterPro"/>
</dbReference>
<dbReference type="GO" id="GO:0009254">
    <property type="term" value="P:peptidoglycan turnover"/>
    <property type="evidence" value="ECO:0007669"/>
    <property type="project" value="UniProtKB-UniRule"/>
</dbReference>
<dbReference type="CDD" id="cd24050">
    <property type="entry name" value="ASKHA_NBD_ANMK"/>
    <property type="match status" value="1"/>
</dbReference>
<dbReference type="Gene3D" id="3.30.420.40">
    <property type="match status" value="2"/>
</dbReference>
<dbReference type="HAMAP" id="MF_01270">
    <property type="entry name" value="AnhMurNAc_kinase"/>
    <property type="match status" value="1"/>
</dbReference>
<dbReference type="InterPro" id="IPR005338">
    <property type="entry name" value="Anhydro_N_Ac-Mur_kinase"/>
</dbReference>
<dbReference type="InterPro" id="IPR043129">
    <property type="entry name" value="ATPase_NBD"/>
</dbReference>
<dbReference type="NCBIfam" id="NF007138">
    <property type="entry name" value="PRK09585.1-1"/>
    <property type="match status" value="1"/>
</dbReference>
<dbReference type="NCBIfam" id="NF007139">
    <property type="entry name" value="PRK09585.1-3"/>
    <property type="match status" value="1"/>
</dbReference>
<dbReference type="NCBIfam" id="NF007148">
    <property type="entry name" value="PRK09585.3-2"/>
    <property type="match status" value="1"/>
</dbReference>
<dbReference type="PANTHER" id="PTHR30605">
    <property type="entry name" value="ANHYDRO-N-ACETYLMURAMIC ACID KINASE"/>
    <property type="match status" value="1"/>
</dbReference>
<dbReference type="PANTHER" id="PTHR30605:SF0">
    <property type="entry name" value="ANHYDRO-N-ACETYLMURAMIC ACID KINASE"/>
    <property type="match status" value="1"/>
</dbReference>
<dbReference type="Pfam" id="PF03702">
    <property type="entry name" value="AnmK"/>
    <property type="match status" value="1"/>
</dbReference>
<dbReference type="SUPFAM" id="SSF53067">
    <property type="entry name" value="Actin-like ATPase domain"/>
    <property type="match status" value="1"/>
</dbReference>
<keyword id="KW-0067">ATP-binding</keyword>
<keyword id="KW-0119">Carbohydrate metabolism</keyword>
<keyword id="KW-0418">Kinase</keyword>
<keyword id="KW-0547">Nucleotide-binding</keyword>
<keyword id="KW-0808">Transferase</keyword>
<accession>Q5PIK4</accession>
<name>ANMK_SALPA</name>
<feature type="chain" id="PRO_0000250054" description="Anhydro-N-acetylmuramic acid kinase">
    <location>
        <begin position="1"/>
        <end position="373"/>
    </location>
</feature>
<feature type="binding site" evidence="1">
    <location>
        <begin position="12"/>
        <end position="19"/>
    </location>
    <ligand>
        <name>ATP</name>
        <dbReference type="ChEBI" id="CHEBI:30616"/>
    </ligand>
</feature>
<comment type="function">
    <text evidence="1">Catalyzes the specific phosphorylation of 1,6-anhydro-N-acetylmuramic acid (anhMurNAc) with the simultaneous cleavage of the 1,6-anhydro ring, generating MurNAc-6-P. Is required for the utilization of anhMurNAc either imported from the medium or derived from its own cell wall murein, and thus plays a role in cell wall recycling.</text>
</comment>
<comment type="catalytic activity">
    <reaction evidence="1">
        <text>1,6-anhydro-N-acetyl-beta-muramate + ATP + H2O = N-acetyl-D-muramate 6-phosphate + ADP + H(+)</text>
        <dbReference type="Rhea" id="RHEA:24952"/>
        <dbReference type="ChEBI" id="CHEBI:15377"/>
        <dbReference type="ChEBI" id="CHEBI:15378"/>
        <dbReference type="ChEBI" id="CHEBI:30616"/>
        <dbReference type="ChEBI" id="CHEBI:58690"/>
        <dbReference type="ChEBI" id="CHEBI:58722"/>
        <dbReference type="ChEBI" id="CHEBI:456216"/>
        <dbReference type="EC" id="2.7.1.170"/>
    </reaction>
</comment>
<comment type="pathway">
    <text evidence="1">Amino-sugar metabolism; 1,6-anhydro-N-acetylmuramate degradation.</text>
</comment>
<comment type="pathway">
    <text evidence="1">Cell wall biogenesis; peptidoglycan recycling.</text>
</comment>
<comment type="similarity">
    <text evidence="1">Belongs to the anhydro-N-acetylmuramic acid kinase family.</text>
</comment>
<sequence>MKSGRFIGVMSGTSLDGVDVVLAAIDETMVAQQASLTWPIPVHLKKGILDICQGQPLTLSQLGQLDTQLGRLFAQAVNALLAQQRLQPRDIVAIGCHGQTVWHEPTGEAPHTLQIGDNNHIVAHTGITVVGDFRRRDIALGGQGAPLVPAFHHALLGHPTEKRMVLNIGGIANLSLLFPGQAVRGYDTGPGNMLMDAWIWRQCAQPYDKDAAWAKEGQVILPLLQKMLRDPYFAASAPKSTGREYFNYGWLERHLAAFPGADARDVQATLAELTAVSIAQQVLLNGGCERLMVCGGGGRNPLVMARLAALLTGIEVSTTDKAGISGDDMEALAFAWLAWRTLAGLPGNLPSVTGATEASVLGAIYPANPITQS</sequence>
<reference key="1">
    <citation type="journal article" date="2004" name="Nat. Genet.">
        <title>Comparison of genome degradation in Paratyphi A and Typhi, human-restricted serovars of Salmonella enterica that cause typhoid.</title>
        <authorList>
            <person name="McClelland M."/>
            <person name="Sanderson K.E."/>
            <person name="Clifton S.W."/>
            <person name="Latreille P."/>
            <person name="Porwollik S."/>
            <person name="Sabo A."/>
            <person name="Meyer R."/>
            <person name="Bieri T."/>
            <person name="Ozersky P."/>
            <person name="McLellan M."/>
            <person name="Harkins C.R."/>
            <person name="Wang C."/>
            <person name="Nguyen C."/>
            <person name="Berghoff A."/>
            <person name="Elliott G."/>
            <person name="Kohlberg S."/>
            <person name="Strong C."/>
            <person name="Du F."/>
            <person name="Carter J."/>
            <person name="Kremizki C."/>
            <person name="Layman D."/>
            <person name="Leonard S."/>
            <person name="Sun H."/>
            <person name="Fulton L."/>
            <person name="Nash W."/>
            <person name="Miner T."/>
            <person name="Minx P."/>
            <person name="Delehaunty K."/>
            <person name="Fronick C."/>
            <person name="Magrini V."/>
            <person name="Nhan M."/>
            <person name="Warren W."/>
            <person name="Florea L."/>
            <person name="Spieth J."/>
            <person name="Wilson R.K."/>
        </authorList>
    </citation>
    <scope>NUCLEOTIDE SEQUENCE [LARGE SCALE GENOMIC DNA]</scope>
    <source>
        <strain>ATCC 9150 / SARB42</strain>
    </source>
</reference>
<gene>
    <name evidence="1" type="primary">anmK</name>
    <name type="ordered locus">SPA1407</name>
</gene>
<proteinExistence type="inferred from homology"/>
<organism>
    <name type="scientific">Salmonella paratyphi A (strain ATCC 9150 / SARB42)</name>
    <dbReference type="NCBI Taxonomy" id="295319"/>
    <lineage>
        <taxon>Bacteria</taxon>
        <taxon>Pseudomonadati</taxon>
        <taxon>Pseudomonadota</taxon>
        <taxon>Gammaproteobacteria</taxon>
        <taxon>Enterobacterales</taxon>
        <taxon>Enterobacteriaceae</taxon>
        <taxon>Salmonella</taxon>
    </lineage>
</organism>